<comment type="function">
    <text evidence="1">Regulates arginine biosynthesis genes.</text>
</comment>
<comment type="pathway">
    <text>Amino-acid biosynthesis; L-arginine biosynthesis [regulation].</text>
</comment>
<comment type="subcellular location">
    <subcellularLocation>
        <location evidence="1">Cytoplasm</location>
    </subcellularLocation>
</comment>
<comment type="similarity">
    <text evidence="1">Belongs to the ArgR family.</text>
</comment>
<protein>
    <recommendedName>
        <fullName evidence="1">Arginine repressor</fullName>
    </recommendedName>
</protein>
<proteinExistence type="inferred from homology"/>
<evidence type="ECO:0000255" key="1">
    <source>
        <dbReference type="HAMAP-Rule" id="MF_00173"/>
    </source>
</evidence>
<gene>
    <name evidence="1" type="primary">argR</name>
    <name type="ordered locus">CLL_A2398</name>
</gene>
<name>ARGR_CLOBB</name>
<feature type="chain" id="PRO_1000097864" description="Arginine repressor">
    <location>
        <begin position="1"/>
        <end position="150"/>
    </location>
</feature>
<dbReference type="EMBL" id="CP001056">
    <property type="protein sequence ID" value="ACD22231.1"/>
    <property type="molecule type" value="Genomic_DNA"/>
</dbReference>
<dbReference type="SMR" id="B2TRM1"/>
<dbReference type="KEGG" id="cbk:CLL_A2398"/>
<dbReference type="PATRIC" id="fig|935198.13.peg.2356"/>
<dbReference type="HOGENOM" id="CLU_097103_3_0_9"/>
<dbReference type="UniPathway" id="UPA00068"/>
<dbReference type="Proteomes" id="UP000001195">
    <property type="component" value="Chromosome"/>
</dbReference>
<dbReference type="GO" id="GO:0005737">
    <property type="term" value="C:cytoplasm"/>
    <property type="evidence" value="ECO:0007669"/>
    <property type="project" value="UniProtKB-SubCell"/>
</dbReference>
<dbReference type="GO" id="GO:0034618">
    <property type="term" value="F:arginine binding"/>
    <property type="evidence" value="ECO:0007669"/>
    <property type="project" value="InterPro"/>
</dbReference>
<dbReference type="GO" id="GO:0003677">
    <property type="term" value="F:DNA binding"/>
    <property type="evidence" value="ECO:0007669"/>
    <property type="project" value="UniProtKB-KW"/>
</dbReference>
<dbReference type="GO" id="GO:0003700">
    <property type="term" value="F:DNA-binding transcription factor activity"/>
    <property type="evidence" value="ECO:0007669"/>
    <property type="project" value="UniProtKB-UniRule"/>
</dbReference>
<dbReference type="GO" id="GO:0006526">
    <property type="term" value="P:L-arginine biosynthetic process"/>
    <property type="evidence" value="ECO:0007669"/>
    <property type="project" value="UniProtKB-UniPathway"/>
</dbReference>
<dbReference type="GO" id="GO:0051259">
    <property type="term" value="P:protein complex oligomerization"/>
    <property type="evidence" value="ECO:0007669"/>
    <property type="project" value="InterPro"/>
</dbReference>
<dbReference type="GO" id="GO:1900079">
    <property type="term" value="P:regulation of arginine biosynthetic process"/>
    <property type="evidence" value="ECO:0007669"/>
    <property type="project" value="UniProtKB-UniRule"/>
</dbReference>
<dbReference type="Gene3D" id="3.30.1360.40">
    <property type="match status" value="1"/>
</dbReference>
<dbReference type="Gene3D" id="1.10.10.10">
    <property type="entry name" value="Winged helix-like DNA-binding domain superfamily/Winged helix DNA-binding domain"/>
    <property type="match status" value="1"/>
</dbReference>
<dbReference type="HAMAP" id="MF_00173">
    <property type="entry name" value="Arg_repressor"/>
    <property type="match status" value="1"/>
</dbReference>
<dbReference type="InterPro" id="IPR001669">
    <property type="entry name" value="Arg_repress"/>
</dbReference>
<dbReference type="InterPro" id="IPR020899">
    <property type="entry name" value="Arg_repress_C"/>
</dbReference>
<dbReference type="InterPro" id="IPR036251">
    <property type="entry name" value="Arg_repress_C_sf"/>
</dbReference>
<dbReference type="InterPro" id="IPR020900">
    <property type="entry name" value="Arg_repress_DNA-bd"/>
</dbReference>
<dbReference type="InterPro" id="IPR036388">
    <property type="entry name" value="WH-like_DNA-bd_sf"/>
</dbReference>
<dbReference type="InterPro" id="IPR036390">
    <property type="entry name" value="WH_DNA-bd_sf"/>
</dbReference>
<dbReference type="NCBIfam" id="TIGR01529">
    <property type="entry name" value="argR_whole"/>
    <property type="match status" value="1"/>
</dbReference>
<dbReference type="NCBIfam" id="NF001680">
    <property type="entry name" value="PRK00441.1"/>
    <property type="match status" value="1"/>
</dbReference>
<dbReference type="PANTHER" id="PTHR34471">
    <property type="entry name" value="ARGININE REPRESSOR"/>
    <property type="match status" value="1"/>
</dbReference>
<dbReference type="PANTHER" id="PTHR34471:SF1">
    <property type="entry name" value="ARGININE REPRESSOR"/>
    <property type="match status" value="1"/>
</dbReference>
<dbReference type="Pfam" id="PF01316">
    <property type="entry name" value="Arg_repressor"/>
    <property type="match status" value="1"/>
</dbReference>
<dbReference type="Pfam" id="PF02863">
    <property type="entry name" value="Arg_repressor_C"/>
    <property type="match status" value="1"/>
</dbReference>
<dbReference type="PRINTS" id="PR01467">
    <property type="entry name" value="ARGREPRESSOR"/>
</dbReference>
<dbReference type="SUPFAM" id="SSF55252">
    <property type="entry name" value="C-terminal domain of arginine repressor"/>
    <property type="match status" value="1"/>
</dbReference>
<dbReference type="SUPFAM" id="SSF46785">
    <property type="entry name" value="Winged helix' DNA-binding domain"/>
    <property type="match status" value="1"/>
</dbReference>
<accession>B2TRM1</accession>
<sequence>MKSKRHTKILEIISSKEIETQEDLAEELKLQGFDVTQATVSRDIKNLKLIKIQGASGNYKYVVSSGEEKNIIDRLSNILSNTVISAENVDKMVVIKTISGSGSAAAEAIDNLEGSDVAGTVAGDNTIFILLRSLEKAEELVAKIRKRISL</sequence>
<keyword id="KW-0028">Amino-acid biosynthesis</keyword>
<keyword id="KW-0055">Arginine biosynthesis</keyword>
<keyword id="KW-0963">Cytoplasm</keyword>
<keyword id="KW-0238">DNA-binding</keyword>
<keyword id="KW-0678">Repressor</keyword>
<keyword id="KW-0804">Transcription</keyword>
<keyword id="KW-0805">Transcription regulation</keyword>
<reference key="1">
    <citation type="submission" date="2008-04" db="EMBL/GenBank/DDBJ databases">
        <title>Complete sequence of Clostridium botulinum strain Eklund.</title>
        <authorList>
            <person name="Brinkac L.M."/>
            <person name="Brown J.L."/>
            <person name="Bruce D."/>
            <person name="Detter C."/>
            <person name="Munk C."/>
            <person name="Smith L.A."/>
            <person name="Smith T.J."/>
            <person name="Sutton G."/>
            <person name="Brettin T.S."/>
        </authorList>
    </citation>
    <scope>NUCLEOTIDE SEQUENCE [LARGE SCALE GENOMIC DNA]</scope>
    <source>
        <strain>Eklund 17B / Type B</strain>
    </source>
</reference>
<organism>
    <name type="scientific">Clostridium botulinum (strain Eklund 17B / Type B)</name>
    <dbReference type="NCBI Taxonomy" id="935198"/>
    <lineage>
        <taxon>Bacteria</taxon>
        <taxon>Bacillati</taxon>
        <taxon>Bacillota</taxon>
        <taxon>Clostridia</taxon>
        <taxon>Eubacteriales</taxon>
        <taxon>Clostridiaceae</taxon>
        <taxon>Clostridium</taxon>
    </lineage>
</organism>